<protein>
    <recommendedName>
        <fullName evidence="1">Carbamoyl phosphate synthase large chain</fullName>
        <ecNumber evidence="1">6.3.4.16</ecNumber>
        <ecNumber evidence="1">6.3.5.5</ecNumber>
    </recommendedName>
    <alternativeName>
        <fullName evidence="1">Carbamoyl phosphate synthetase ammonia chain</fullName>
    </alternativeName>
</protein>
<gene>
    <name evidence="1" type="primary">carB</name>
    <name type="ordered locus">SUB0735</name>
</gene>
<comment type="function">
    <text evidence="1">Large subunit of the glutamine-dependent carbamoyl phosphate synthetase (CPSase). CPSase catalyzes the formation of carbamoyl phosphate from the ammonia moiety of glutamine, carbonate, and phosphate donated by ATP, constituting the first step of 2 biosynthetic pathways, one leading to arginine and/or urea and the other to pyrimidine nucleotides. The large subunit (synthetase) binds the substrates ammonia (free or transferred from glutamine from the small subunit), hydrogencarbonate and ATP and carries out an ATP-coupled ligase reaction, activating hydrogencarbonate by forming carboxy phosphate which reacts with ammonia to form carbamoyl phosphate.</text>
</comment>
<comment type="catalytic activity">
    <reaction evidence="1">
        <text>hydrogencarbonate + L-glutamine + 2 ATP + H2O = carbamoyl phosphate + L-glutamate + 2 ADP + phosphate + 2 H(+)</text>
        <dbReference type="Rhea" id="RHEA:18633"/>
        <dbReference type="ChEBI" id="CHEBI:15377"/>
        <dbReference type="ChEBI" id="CHEBI:15378"/>
        <dbReference type="ChEBI" id="CHEBI:17544"/>
        <dbReference type="ChEBI" id="CHEBI:29985"/>
        <dbReference type="ChEBI" id="CHEBI:30616"/>
        <dbReference type="ChEBI" id="CHEBI:43474"/>
        <dbReference type="ChEBI" id="CHEBI:58228"/>
        <dbReference type="ChEBI" id="CHEBI:58359"/>
        <dbReference type="ChEBI" id="CHEBI:456216"/>
        <dbReference type="EC" id="6.3.5.5"/>
    </reaction>
</comment>
<comment type="catalytic activity">
    <molecule>Carbamoyl phosphate synthase large chain</molecule>
    <reaction evidence="1">
        <text>hydrogencarbonate + NH4(+) + 2 ATP = carbamoyl phosphate + 2 ADP + phosphate + 2 H(+)</text>
        <dbReference type="Rhea" id="RHEA:18029"/>
        <dbReference type="ChEBI" id="CHEBI:15378"/>
        <dbReference type="ChEBI" id="CHEBI:17544"/>
        <dbReference type="ChEBI" id="CHEBI:28938"/>
        <dbReference type="ChEBI" id="CHEBI:30616"/>
        <dbReference type="ChEBI" id="CHEBI:43474"/>
        <dbReference type="ChEBI" id="CHEBI:58228"/>
        <dbReference type="ChEBI" id="CHEBI:456216"/>
        <dbReference type="EC" id="6.3.4.16"/>
    </reaction>
</comment>
<comment type="cofactor">
    <cofactor evidence="1">
        <name>Mg(2+)</name>
        <dbReference type="ChEBI" id="CHEBI:18420"/>
    </cofactor>
    <cofactor evidence="1">
        <name>Mn(2+)</name>
        <dbReference type="ChEBI" id="CHEBI:29035"/>
    </cofactor>
    <text evidence="1">Binds 4 Mg(2+) or Mn(2+) ions per subunit.</text>
</comment>
<comment type="pathway">
    <text evidence="1">Amino-acid biosynthesis; L-arginine biosynthesis; carbamoyl phosphate from bicarbonate: step 1/1.</text>
</comment>
<comment type="pathway">
    <text evidence="1">Pyrimidine metabolism; UMP biosynthesis via de novo pathway; (S)-dihydroorotate from bicarbonate: step 1/3.</text>
</comment>
<comment type="subunit">
    <text evidence="1">Composed of two chains; the small (or glutamine) chain promotes the hydrolysis of glutamine to ammonia, which is used by the large (or ammonia) chain to synthesize carbamoyl phosphate. Tetramer of heterodimers (alpha,beta)4.</text>
</comment>
<comment type="domain">
    <text evidence="1">The large subunit is composed of 2 ATP-grasp domains that are involved in binding the 2 ATP molecules needed for carbamoyl phosphate synthesis. The N-terminal ATP-grasp domain (referred to as the carboxyphosphate synthetic component) catalyzes the ATP-dependent phosphorylation of hydrogencarbonate to carboxyphosphate and the subsequent nucleophilic attack by ammonia to form a carbamate intermediate. The C-terminal ATP-grasp domain (referred to as the carbamoyl phosphate synthetic component) then catalyzes the phosphorylation of carbamate with the second ATP to form the end product carbamoyl phosphate. The reactive and unstable enzyme intermediates are sequentially channeled from one active site to the next through the interior of the protein over a distance of at least 96 A.</text>
</comment>
<comment type="similarity">
    <text evidence="1">Belongs to the CarB family.</text>
</comment>
<evidence type="ECO:0000255" key="1">
    <source>
        <dbReference type="HAMAP-Rule" id="MF_01210"/>
    </source>
</evidence>
<proteinExistence type="inferred from homology"/>
<sequence>MPKRTDIKKIMVIGSGPIVIGQAAEFDYAGTQACLALKEEGYEVVLVNSNPATIMTDKEIADRVYIEPLTTEFVSRILRKERPDALLPTLGGQTGLNLAMSLSETGILNELGVELLGTKLSAINQAEDREQFKALMKALKQPIPESDIVHSVEEALLFASQIGYPVIVRPAFTLGGTGGGICTNDIELEDITAKGLKLSPVNQCLIEKSIAGFKEIEYEVMRDSADNALVVCNMENFDPVGIHTGDSIVFAPSQTLSDYEHQLLRDASLKIIRALKIEGGCNVQLALDPNSFDYYVIEVNPRVSRSSALASKATGYPIAKIAAKIAIGLQLDEMINPITGKTYAMFEPALDYVVAKMPRFPFDKFESADRHLGTQMKATGEVMAIGRTIEESLLKACRSLEIGIYHNECKEFSLVDDQELLMKLIKAQDDRLFYLSEALKRGMTIDELSQLTKINPFFLDKLLHILEIERQLSLEKWQKWPLEHAKKYGFSDKKIAELWQASESDIRDFRIQHGIKPVYKMVDTCAAEFESQTPYYYSTYAFENESQASPNKSILVLGSGPIRIGQGIEFDYATVHSVKAIQAAGYEAIIMNSNPETVSTDFSISDKLYFEPLTVEDVMNVIDLERPEGVILQFGGQTAINLAEALDKANVPILGTQVRDLDRAENRQLFEKALHDINIPQPLGQTVTNEQEALQVARRIGFPVLVRPSYVIGGRAMQIVTQEEDLLTYMQSAVKVSSDQPVLIDSYILGQECEVDAISDGQDVLIPGIMEHIEAAGVHSGDSMAVYPPQNLSEDIIQTIIDYTKRLAINLNCKGMMNIQFVVKDKTVYVIEVNPRASRTVPFMSKVTGIPMAQVATKLILGSSLKELGYEDGLYQKSSLVHVKAPIFSFNKLSKVDSLLGPEMKSTGEVIGSDSSLEKALYKAFEASYMHVPDFGNIIFTISDDKKAESLRLAKGFSALGYRIFATSGTSDYFLQHQLKTQKIHKIGEQSDHILELMKSGKIQAVINTDSKNGMMNRDGQLIRSIANEQGIPLFTSLDTAKAMLRVLESRSFSIQSL</sequence>
<name>CARB_STRU0</name>
<feature type="chain" id="PRO_1000164718" description="Carbamoyl phosphate synthase large chain">
    <location>
        <begin position="1"/>
        <end position="1058"/>
    </location>
</feature>
<feature type="domain" description="ATP-grasp 1" evidence="1">
    <location>
        <begin position="133"/>
        <end position="327"/>
    </location>
</feature>
<feature type="domain" description="ATP-grasp 2" evidence="1">
    <location>
        <begin position="671"/>
        <end position="861"/>
    </location>
</feature>
<feature type="domain" description="MGS-like" evidence="1">
    <location>
        <begin position="930"/>
        <end position="1058"/>
    </location>
</feature>
<feature type="region of interest" description="Carboxyphosphate synthetic domain" evidence="1">
    <location>
        <begin position="1"/>
        <end position="401"/>
    </location>
</feature>
<feature type="region of interest" description="Oligomerization domain" evidence="1">
    <location>
        <begin position="402"/>
        <end position="546"/>
    </location>
</feature>
<feature type="region of interest" description="Carbamoyl phosphate synthetic domain" evidence="1">
    <location>
        <begin position="547"/>
        <end position="929"/>
    </location>
</feature>
<feature type="region of interest" description="Allosteric domain" evidence="1">
    <location>
        <begin position="930"/>
        <end position="1058"/>
    </location>
</feature>
<feature type="binding site" evidence="1">
    <location>
        <position position="129"/>
    </location>
    <ligand>
        <name>ATP</name>
        <dbReference type="ChEBI" id="CHEBI:30616"/>
        <label>1</label>
    </ligand>
</feature>
<feature type="binding site" evidence="1">
    <location>
        <position position="169"/>
    </location>
    <ligand>
        <name>ATP</name>
        <dbReference type="ChEBI" id="CHEBI:30616"/>
        <label>1</label>
    </ligand>
</feature>
<feature type="binding site" evidence="1">
    <location>
        <position position="175"/>
    </location>
    <ligand>
        <name>ATP</name>
        <dbReference type="ChEBI" id="CHEBI:30616"/>
        <label>1</label>
    </ligand>
</feature>
<feature type="binding site" evidence="1">
    <location>
        <position position="176"/>
    </location>
    <ligand>
        <name>ATP</name>
        <dbReference type="ChEBI" id="CHEBI:30616"/>
        <label>1</label>
    </ligand>
</feature>
<feature type="binding site" evidence="1">
    <location>
        <position position="208"/>
    </location>
    <ligand>
        <name>ATP</name>
        <dbReference type="ChEBI" id="CHEBI:30616"/>
        <label>1</label>
    </ligand>
</feature>
<feature type="binding site" evidence="1">
    <location>
        <position position="210"/>
    </location>
    <ligand>
        <name>ATP</name>
        <dbReference type="ChEBI" id="CHEBI:30616"/>
        <label>1</label>
    </ligand>
</feature>
<feature type="binding site" evidence="1">
    <location>
        <position position="215"/>
    </location>
    <ligand>
        <name>ATP</name>
        <dbReference type="ChEBI" id="CHEBI:30616"/>
        <label>1</label>
    </ligand>
</feature>
<feature type="binding site" evidence="1">
    <location>
        <position position="241"/>
    </location>
    <ligand>
        <name>ATP</name>
        <dbReference type="ChEBI" id="CHEBI:30616"/>
        <label>1</label>
    </ligand>
</feature>
<feature type="binding site" evidence="1">
    <location>
        <position position="242"/>
    </location>
    <ligand>
        <name>ATP</name>
        <dbReference type="ChEBI" id="CHEBI:30616"/>
        <label>1</label>
    </ligand>
</feature>
<feature type="binding site" evidence="1">
    <location>
        <position position="243"/>
    </location>
    <ligand>
        <name>ATP</name>
        <dbReference type="ChEBI" id="CHEBI:30616"/>
        <label>1</label>
    </ligand>
</feature>
<feature type="binding site" evidence="1">
    <location>
        <position position="284"/>
    </location>
    <ligand>
        <name>ATP</name>
        <dbReference type="ChEBI" id="CHEBI:30616"/>
        <label>1</label>
    </ligand>
</feature>
<feature type="binding site" evidence="1">
    <location>
        <position position="284"/>
    </location>
    <ligand>
        <name>Mg(2+)</name>
        <dbReference type="ChEBI" id="CHEBI:18420"/>
        <label>1</label>
    </ligand>
</feature>
<feature type="binding site" evidence="1">
    <location>
        <position position="284"/>
    </location>
    <ligand>
        <name>Mn(2+)</name>
        <dbReference type="ChEBI" id="CHEBI:29035"/>
        <label>1</label>
    </ligand>
</feature>
<feature type="binding site" evidence="1">
    <location>
        <position position="298"/>
    </location>
    <ligand>
        <name>ATP</name>
        <dbReference type="ChEBI" id="CHEBI:30616"/>
        <label>1</label>
    </ligand>
</feature>
<feature type="binding site" evidence="1">
    <location>
        <position position="298"/>
    </location>
    <ligand>
        <name>Mg(2+)</name>
        <dbReference type="ChEBI" id="CHEBI:18420"/>
        <label>1</label>
    </ligand>
</feature>
<feature type="binding site" evidence="1">
    <location>
        <position position="298"/>
    </location>
    <ligand>
        <name>Mg(2+)</name>
        <dbReference type="ChEBI" id="CHEBI:18420"/>
        <label>2</label>
    </ligand>
</feature>
<feature type="binding site" evidence="1">
    <location>
        <position position="298"/>
    </location>
    <ligand>
        <name>Mn(2+)</name>
        <dbReference type="ChEBI" id="CHEBI:29035"/>
        <label>1</label>
    </ligand>
</feature>
<feature type="binding site" evidence="1">
    <location>
        <position position="298"/>
    </location>
    <ligand>
        <name>Mn(2+)</name>
        <dbReference type="ChEBI" id="CHEBI:29035"/>
        <label>2</label>
    </ligand>
</feature>
<feature type="binding site" evidence="1">
    <location>
        <position position="300"/>
    </location>
    <ligand>
        <name>Mg(2+)</name>
        <dbReference type="ChEBI" id="CHEBI:18420"/>
        <label>2</label>
    </ligand>
</feature>
<feature type="binding site" evidence="1">
    <location>
        <position position="300"/>
    </location>
    <ligand>
        <name>Mn(2+)</name>
        <dbReference type="ChEBI" id="CHEBI:29035"/>
        <label>2</label>
    </ligand>
</feature>
<feature type="binding site" evidence="1">
    <location>
        <position position="707"/>
    </location>
    <ligand>
        <name>ATP</name>
        <dbReference type="ChEBI" id="CHEBI:30616"/>
        <label>2</label>
    </ligand>
</feature>
<feature type="binding site" evidence="1">
    <location>
        <position position="746"/>
    </location>
    <ligand>
        <name>ATP</name>
        <dbReference type="ChEBI" id="CHEBI:30616"/>
        <label>2</label>
    </ligand>
</feature>
<feature type="binding site" evidence="1">
    <location>
        <position position="748"/>
    </location>
    <ligand>
        <name>ATP</name>
        <dbReference type="ChEBI" id="CHEBI:30616"/>
        <label>2</label>
    </ligand>
</feature>
<feature type="binding site" evidence="1">
    <location>
        <position position="752"/>
    </location>
    <ligand>
        <name>ATP</name>
        <dbReference type="ChEBI" id="CHEBI:30616"/>
        <label>2</label>
    </ligand>
</feature>
<feature type="binding site" evidence="1">
    <location>
        <position position="777"/>
    </location>
    <ligand>
        <name>ATP</name>
        <dbReference type="ChEBI" id="CHEBI:30616"/>
        <label>2</label>
    </ligand>
</feature>
<feature type="binding site" evidence="1">
    <location>
        <position position="778"/>
    </location>
    <ligand>
        <name>ATP</name>
        <dbReference type="ChEBI" id="CHEBI:30616"/>
        <label>2</label>
    </ligand>
</feature>
<feature type="binding site" evidence="1">
    <location>
        <position position="779"/>
    </location>
    <ligand>
        <name>ATP</name>
        <dbReference type="ChEBI" id="CHEBI:30616"/>
        <label>2</label>
    </ligand>
</feature>
<feature type="binding site" evidence="1">
    <location>
        <position position="780"/>
    </location>
    <ligand>
        <name>ATP</name>
        <dbReference type="ChEBI" id="CHEBI:30616"/>
        <label>2</label>
    </ligand>
</feature>
<feature type="binding site" evidence="1">
    <location>
        <position position="820"/>
    </location>
    <ligand>
        <name>ATP</name>
        <dbReference type="ChEBI" id="CHEBI:30616"/>
        <label>2</label>
    </ligand>
</feature>
<feature type="binding site" evidence="1">
    <location>
        <position position="820"/>
    </location>
    <ligand>
        <name>Mg(2+)</name>
        <dbReference type="ChEBI" id="CHEBI:18420"/>
        <label>3</label>
    </ligand>
</feature>
<feature type="binding site" evidence="1">
    <location>
        <position position="820"/>
    </location>
    <ligand>
        <name>Mn(2+)</name>
        <dbReference type="ChEBI" id="CHEBI:29035"/>
        <label>3</label>
    </ligand>
</feature>
<feature type="binding site" evidence="1">
    <location>
        <position position="832"/>
    </location>
    <ligand>
        <name>ATP</name>
        <dbReference type="ChEBI" id="CHEBI:30616"/>
        <label>2</label>
    </ligand>
</feature>
<feature type="binding site" evidence="1">
    <location>
        <position position="832"/>
    </location>
    <ligand>
        <name>Mg(2+)</name>
        <dbReference type="ChEBI" id="CHEBI:18420"/>
        <label>3</label>
    </ligand>
</feature>
<feature type="binding site" evidence="1">
    <location>
        <position position="832"/>
    </location>
    <ligand>
        <name>Mg(2+)</name>
        <dbReference type="ChEBI" id="CHEBI:18420"/>
        <label>4</label>
    </ligand>
</feature>
<feature type="binding site" evidence="1">
    <location>
        <position position="832"/>
    </location>
    <ligand>
        <name>Mn(2+)</name>
        <dbReference type="ChEBI" id="CHEBI:29035"/>
        <label>3</label>
    </ligand>
</feature>
<feature type="binding site" evidence="1">
    <location>
        <position position="832"/>
    </location>
    <ligand>
        <name>Mn(2+)</name>
        <dbReference type="ChEBI" id="CHEBI:29035"/>
        <label>4</label>
    </ligand>
</feature>
<feature type="binding site" evidence="1">
    <location>
        <position position="834"/>
    </location>
    <ligand>
        <name>Mg(2+)</name>
        <dbReference type="ChEBI" id="CHEBI:18420"/>
        <label>4</label>
    </ligand>
</feature>
<feature type="binding site" evidence="1">
    <location>
        <position position="834"/>
    </location>
    <ligand>
        <name>Mn(2+)</name>
        <dbReference type="ChEBI" id="CHEBI:29035"/>
        <label>4</label>
    </ligand>
</feature>
<organism>
    <name type="scientific">Streptococcus uberis (strain ATCC BAA-854 / 0140J)</name>
    <dbReference type="NCBI Taxonomy" id="218495"/>
    <lineage>
        <taxon>Bacteria</taxon>
        <taxon>Bacillati</taxon>
        <taxon>Bacillota</taxon>
        <taxon>Bacilli</taxon>
        <taxon>Lactobacillales</taxon>
        <taxon>Streptococcaceae</taxon>
        <taxon>Streptococcus</taxon>
    </lineage>
</organism>
<reference key="1">
    <citation type="journal article" date="2009" name="BMC Genomics">
        <title>Evidence for niche adaptation in the genome of the bovine pathogen Streptococcus uberis.</title>
        <authorList>
            <person name="Ward P.N."/>
            <person name="Holden M.T.G."/>
            <person name="Leigh J.A."/>
            <person name="Lennard N."/>
            <person name="Bignell A."/>
            <person name="Barron A."/>
            <person name="Clark L."/>
            <person name="Quail M.A."/>
            <person name="Woodward J."/>
            <person name="Barrell B.G."/>
            <person name="Egan S.A."/>
            <person name="Field T.R."/>
            <person name="Maskell D."/>
            <person name="Kehoe M."/>
            <person name="Dowson C.G."/>
            <person name="Chanter N."/>
            <person name="Whatmore A.M."/>
            <person name="Bentley S.D."/>
            <person name="Parkhill J."/>
        </authorList>
    </citation>
    <scope>NUCLEOTIDE SEQUENCE [LARGE SCALE GENOMIC DNA]</scope>
    <source>
        <strain>ATCC BAA-854 / 0140J</strain>
    </source>
</reference>
<dbReference type="EC" id="6.3.4.16" evidence="1"/>
<dbReference type="EC" id="6.3.5.5" evidence="1"/>
<dbReference type="EMBL" id="AM946015">
    <property type="protein sequence ID" value="CAR41663.1"/>
    <property type="molecule type" value="Genomic_DNA"/>
</dbReference>
<dbReference type="RefSeq" id="WP_012658252.1">
    <property type="nucleotide sequence ID" value="NC_012004.1"/>
</dbReference>
<dbReference type="SMR" id="B9DRV7"/>
<dbReference type="STRING" id="218495.SUB0735"/>
<dbReference type="KEGG" id="sub:SUB0735"/>
<dbReference type="eggNOG" id="COG0458">
    <property type="taxonomic scope" value="Bacteria"/>
</dbReference>
<dbReference type="HOGENOM" id="CLU_000513_1_3_9"/>
<dbReference type="OrthoDB" id="9804197at2"/>
<dbReference type="UniPathway" id="UPA00068">
    <property type="reaction ID" value="UER00171"/>
</dbReference>
<dbReference type="UniPathway" id="UPA00070">
    <property type="reaction ID" value="UER00115"/>
</dbReference>
<dbReference type="Proteomes" id="UP000000449">
    <property type="component" value="Chromosome"/>
</dbReference>
<dbReference type="GO" id="GO:0005737">
    <property type="term" value="C:cytoplasm"/>
    <property type="evidence" value="ECO:0007669"/>
    <property type="project" value="TreeGrafter"/>
</dbReference>
<dbReference type="GO" id="GO:0005524">
    <property type="term" value="F:ATP binding"/>
    <property type="evidence" value="ECO:0007669"/>
    <property type="project" value="UniProtKB-UniRule"/>
</dbReference>
<dbReference type="GO" id="GO:0004087">
    <property type="term" value="F:carbamoyl-phosphate synthase (ammonia) activity"/>
    <property type="evidence" value="ECO:0007669"/>
    <property type="project" value="RHEA"/>
</dbReference>
<dbReference type="GO" id="GO:0004088">
    <property type="term" value="F:carbamoyl-phosphate synthase (glutamine-hydrolyzing) activity"/>
    <property type="evidence" value="ECO:0007669"/>
    <property type="project" value="UniProtKB-UniRule"/>
</dbReference>
<dbReference type="GO" id="GO:0046872">
    <property type="term" value="F:metal ion binding"/>
    <property type="evidence" value="ECO:0007669"/>
    <property type="project" value="UniProtKB-KW"/>
</dbReference>
<dbReference type="GO" id="GO:0044205">
    <property type="term" value="P:'de novo' UMP biosynthetic process"/>
    <property type="evidence" value="ECO:0007669"/>
    <property type="project" value="UniProtKB-UniRule"/>
</dbReference>
<dbReference type="GO" id="GO:0006541">
    <property type="term" value="P:glutamine metabolic process"/>
    <property type="evidence" value="ECO:0007669"/>
    <property type="project" value="TreeGrafter"/>
</dbReference>
<dbReference type="GO" id="GO:0006526">
    <property type="term" value="P:L-arginine biosynthetic process"/>
    <property type="evidence" value="ECO:0007669"/>
    <property type="project" value="UniProtKB-UniRule"/>
</dbReference>
<dbReference type="CDD" id="cd01424">
    <property type="entry name" value="MGS_CPS_II"/>
    <property type="match status" value="1"/>
</dbReference>
<dbReference type="FunFam" id="1.10.1030.10:FF:000002">
    <property type="entry name" value="Carbamoyl-phosphate synthase large chain"/>
    <property type="match status" value="1"/>
</dbReference>
<dbReference type="FunFam" id="3.30.1490.20:FF:000001">
    <property type="entry name" value="Carbamoyl-phosphate synthase large chain"/>
    <property type="match status" value="1"/>
</dbReference>
<dbReference type="FunFam" id="3.30.470.20:FF:000001">
    <property type="entry name" value="Carbamoyl-phosphate synthase large chain"/>
    <property type="match status" value="1"/>
</dbReference>
<dbReference type="FunFam" id="3.30.470.20:FF:000026">
    <property type="entry name" value="Carbamoyl-phosphate synthase large chain"/>
    <property type="match status" value="1"/>
</dbReference>
<dbReference type="FunFam" id="3.40.50.20:FF:000001">
    <property type="entry name" value="Carbamoyl-phosphate synthase large chain"/>
    <property type="match status" value="2"/>
</dbReference>
<dbReference type="Gene3D" id="3.40.50.20">
    <property type="match status" value="2"/>
</dbReference>
<dbReference type="Gene3D" id="3.30.1490.20">
    <property type="entry name" value="ATP-grasp fold, A domain"/>
    <property type="match status" value="1"/>
</dbReference>
<dbReference type="Gene3D" id="3.30.470.20">
    <property type="entry name" value="ATP-grasp fold, B domain"/>
    <property type="match status" value="2"/>
</dbReference>
<dbReference type="Gene3D" id="1.10.1030.10">
    <property type="entry name" value="Carbamoyl-phosphate synthetase, large subunit oligomerisation domain"/>
    <property type="match status" value="1"/>
</dbReference>
<dbReference type="Gene3D" id="3.40.50.1380">
    <property type="entry name" value="Methylglyoxal synthase-like domain"/>
    <property type="match status" value="1"/>
</dbReference>
<dbReference type="HAMAP" id="MF_01210_A">
    <property type="entry name" value="CPSase_L_chain_A"/>
    <property type="match status" value="1"/>
</dbReference>
<dbReference type="HAMAP" id="MF_01210_B">
    <property type="entry name" value="CPSase_L_chain_B"/>
    <property type="match status" value="1"/>
</dbReference>
<dbReference type="InterPro" id="IPR011761">
    <property type="entry name" value="ATP-grasp"/>
</dbReference>
<dbReference type="InterPro" id="IPR013815">
    <property type="entry name" value="ATP_grasp_subdomain_1"/>
</dbReference>
<dbReference type="InterPro" id="IPR006275">
    <property type="entry name" value="CarbamoylP_synth_lsu"/>
</dbReference>
<dbReference type="InterPro" id="IPR005480">
    <property type="entry name" value="CarbamoylP_synth_lsu_oligo"/>
</dbReference>
<dbReference type="InterPro" id="IPR036897">
    <property type="entry name" value="CarbamoylP_synth_lsu_oligo_sf"/>
</dbReference>
<dbReference type="InterPro" id="IPR005479">
    <property type="entry name" value="CbamoylP_synth_lsu-like_ATP-bd"/>
</dbReference>
<dbReference type="InterPro" id="IPR005483">
    <property type="entry name" value="CbamoylP_synth_lsu_CPSase_dom"/>
</dbReference>
<dbReference type="InterPro" id="IPR011607">
    <property type="entry name" value="MGS-like_dom"/>
</dbReference>
<dbReference type="InterPro" id="IPR036914">
    <property type="entry name" value="MGS-like_dom_sf"/>
</dbReference>
<dbReference type="InterPro" id="IPR033937">
    <property type="entry name" value="MGS_CPS_CarB"/>
</dbReference>
<dbReference type="InterPro" id="IPR016185">
    <property type="entry name" value="PreATP-grasp_dom_sf"/>
</dbReference>
<dbReference type="NCBIfam" id="TIGR01369">
    <property type="entry name" value="CPSaseII_lrg"/>
    <property type="match status" value="1"/>
</dbReference>
<dbReference type="NCBIfam" id="NF003671">
    <property type="entry name" value="PRK05294.1"/>
    <property type="match status" value="1"/>
</dbReference>
<dbReference type="NCBIfam" id="NF009455">
    <property type="entry name" value="PRK12815.1"/>
    <property type="match status" value="1"/>
</dbReference>
<dbReference type="PANTHER" id="PTHR11405:SF53">
    <property type="entry name" value="CARBAMOYL-PHOSPHATE SYNTHASE [AMMONIA], MITOCHONDRIAL"/>
    <property type="match status" value="1"/>
</dbReference>
<dbReference type="PANTHER" id="PTHR11405">
    <property type="entry name" value="CARBAMOYLTRANSFERASE FAMILY MEMBER"/>
    <property type="match status" value="1"/>
</dbReference>
<dbReference type="Pfam" id="PF02786">
    <property type="entry name" value="CPSase_L_D2"/>
    <property type="match status" value="2"/>
</dbReference>
<dbReference type="Pfam" id="PF02787">
    <property type="entry name" value="CPSase_L_D3"/>
    <property type="match status" value="1"/>
</dbReference>
<dbReference type="Pfam" id="PF02142">
    <property type="entry name" value="MGS"/>
    <property type="match status" value="1"/>
</dbReference>
<dbReference type="PRINTS" id="PR00098">
    <property type="entry name" value="CPSASE"/>
</dbReference>
<dbReference type="SMART" id="SM01096">
    <property type="entry name" value="CPSase_L_D3"/>
    <property type="match status" value="1"/>
</dbReference>
<dbReference type="SMART" id="SM00851">
    <property type="entry name" value="MGS"/>
    <property type="match status" value="1"/>
</dbReference>
<dbReference type="SUPFAM" id="SSF48108">
    <property type="entry name" value="Carbamoyl phosphate synthetase, large subunit connection domain"/>
    <property type="match status" value="1"/>
</dbReference>
<dbReference type="SUPFAM" id="SSF56059">
    <property type="entry name" value="Glutathione synthetase ATP-binding domain-like"/>
    <property type="match status" value="2"/>
</dbReference>
<dbReference type="SUPFAM" id="SSF52335">
    <property type="entry name" value="Methylglyoxal synthase-like"/>
    <property type="match status" value="1"/>
</dbReference>
<dbReference type="SUPFAM" id="SSF52440">
    <property type="entry name" value="PreATP-grasp domain"/>
    <property type="match status" value="2"/>
</dbReference>
<dbReference type="PROSITE" id="PS50975">
    <property type="entry name" value="ATP_GRASP"/>
    <property type="match status" value="2"/>
</dbReference>
<dbReference type="PROSITE" id="PS00866">
    <property type="entry name" value="CPSASE_1"/>
    <property type="match status" value="2"/>
</dbReference>
<dbReference type="PROSITE" id="PS00867">
    <property type="entry name" value="CPSASE_2"/>
    <property type="match status" value="2"/>
</dbReference>
<dbReference type="PROSITE" id="PS51855">
    <property type="entry name" value="MGS"/>
    <property type="match status" value="1"/>
</dbReference>
<accession>B9DRV7</accession>
<keyword id="KW-0028">Amino-acid biosynthesis</keyword>
<keyword id="KW-0055">Arginine biosynthesis</keyword>
<keyword id="KW-0067">ATP-binding</keyword>
<keyword id="KW-0436">Ligase</keyword>
<keyword id="KW-0460">Magnesium</keyword>
<keyword id="KW-0464">Manganese</keyword>
<keyword id="KW-0479">Metal-binding</keyword>
<keyword id="KW-0547">Nucleotide-binding</keyword>
<keyword id="KW-0665">Pyrimidine biosynthesis</keyword>
<keyword id="KW-1185">Reference proteome</keyword>
<keyword id="KW-0677">Repeat</keyword>